<dbReference type="EMBL" id="L28677">
    <property type="protein sequence ID" value="AAA32105.2"/>
    <property type="molecule type" value="Genomic_DNA"/>
</dbReference>
<dbReference type="EMBL" id="X13117">
    <property type="protein sequence ID" value="CAA31509.1"/>
    <property type="molecule type" value="Genomic_DNA"/>
</dbReference>
<dbReference type="PIR" id="S03434">
    <property type="entry name" value="R5TE14"/>
</dbReference>
<dbReference type="RefSeq" id="NP_049608.1">
    <property type="nucleotide sequence ID" value="NC_000862.1"/>
</dbReference>
<dbReference type="SMR" id="P10850"/>
<dbReference type="GeneID" id="800752"/>
<dbReference type="GO" id="GO:0022625">
    <property type="term" value="C:cytosolic large ribosomal subunit"/>
    <property type="evidence" value="ECO:0007669"/>
    <property type="project" value="TreeGrafter"/>
</dbReference>
<dbReference type="GO" id="GO:0005739">
    <property type="term" value="C:mitochondrion"/>
    <property type="evidence" value="ECO:0007669"/>
    <property type="project" value="UniProtKB-SubCell"/>
</dbReference>
<dbReference type="GO" id="GO:0070180">
    <property type="term" value="F:large ribosomal subunit rRNA binding"/>
    <property type="evidence" value="ECO:0007669"/>
    <property type="project" value="TreeGrafter"/>
</dbReference>
<dbReference type="GO" id="GO:0003735">
    <property type="term" value="F:structural constituent of ribosome"/>
    <property type="evidence" value="ECO:0007669"/>
    <property type="project" value="InterPro"/>
</dbReference>
<dbReference type="GO" id="GO:0006412">
    <property type="term" value="P:translation"/>
    <property type="evidence" value="ECO:0007669"/>
    <property type="project" value="InterPro"/>
</dbReference>
<dbReference type="CDD" id="cd00337">
    <property type="entry name" value="Ribosomal_uL14"/>
    <property type="match status" value="1"/>
</dbReference>
<dbReference type="Gene3D" id="2.40.150.20">
    <property type="entry name" value="Ribosomal protein L14"/>
    <property type="match status" value="1"/>
</dbReference>
<dbReference type="HAMAP" id="MF_01367">
    <property type="entry name" value="Ribosomal_uL14"/>
    <property type="match status" value="1"/>
</dbReference>
<dbReference type="InterPro" id="IPR000218">
    <property type="entry name" value="Ribosomal_uL14"/>
</dbReference>
<dbReference type="InterPro" id="IPR019972">
    <property type="entry name" value="Ribosomal_uL14_CS"/>
</dbReference>
<dbReference type="InterPro" id="IPR036853">
    <property type="entry name" value="Ribosomal_uL14_sf"/>
</dbReference>
<dbReference type="PANTHER" id="PTHR11761">
    <property type="entry name" value="50S/60S RIBOSOMAL PROTEIN L14/L23"/>
    <property type="match status" value="1"/>
</dbReference>
<dbReference type="PANTHER" id="PTHR11761:SF3">
    <property type="entry name" value="LARGE RIBOSOMAL SUBUNIT PROTEIN UL14M"/>
    <property type="match status" value="1"/>
</dbReference>
<dbReference type="Pfam" id="PF00238">
    <property type="entry name" value="Ribosomal_L14"/>
    <property type="match status" value="1"/>
</dbReference>
<dbReference type="SMART" id="SM01374">
    <property type="entry name" value="Ribosomal_L14"/>
    <property type="match status" value="1"/>
</dbReference>
<dbReference type="SUPFAM" id="SSF50193">
    <property type="entry name" value="Ribosomal protein L14"/>
    <property type="match status" value="1"/>
</dbReference>
<dbReference type="PROSITE" id="PS00049">
    <property type="entry name" value="RIBOSOMAL_L14"/>
    <property type="match status" value="1"/>
</dbReference>
<geneLocation type="mitochondrion"/>
<accession>P10850</accession>
<protein>
    <recommendedName>
        <fullName evidence="1">Large ribosomal subunit protein uL14m</fullName>
    </recommendedName>
    <alternativeName>
        <fullName>60S ribosomal protein L14, mitochondrial</fullName>
    </alternativeName>
</protein>
<keyword id="KW-0496">Mitochondrion</keyword>
<keyword id="KW-0687">Ribonucleoprotein</keyword>
<keyword id="KW-0689">Ribosomal protein</keyword>
<feature type="chain" id="PRO_0000128609" description="Large ribosomal subunit protein uL14m">
    <location>
        <begin position="1"/>
        <end position="119"/>
    </location>
</feature>
<organism>
    <name type="scientific">Tetrahymena pyriformis</name>
    <dbReference type="NCBI Taxonomy" id="5908"/>
    <lineage>
        <taxon>Eukaryota</taxon>
        <taxon>Sar</taxon>
        <taxon>Alveolata</taxon>
        <taxon>Ciliophora</taxon>
        <taxon>Intramacronucleata</taxon>
        <taxon>Oligohymenophorea</taxon>
        <taxon>Hymenostomatida</taxon>
        <taxon>Tetrahymenina</taxon>
        <taxon>Tetrahymenidae</taxon>
        <taxon>Tetrahymena</taxon>
    </lineage>
</organism>
<evidence type="ECO:0000305" key="1"/>
<comment type="subcellular location">
    <subcellularLocation>
        <location>Mitochondrion</location>
    </subcellularLocation>
</comment>
<comment type="similarity">
    <text evidence="1">Belongs to the universal ribosomal protein uL14 family.</text>
</comment>
<sequence>MIQKETNLKPIDKCGVWSVRAFHLYGGSFRNQSTISNFLKVSVKKTRANNWVPKKTKLKAIIVTLKKELKKIDGSYIKFRTNNVVLLKKRLTPKGKILMGPVSSNLRRKRFLTSFCGSI</sequence>
<proteinExistence type="inferred from homology"/>
<name>RM14_TETPY</name>
<reference key="1">
    <citation type="journal article" date="1989" name="Nucleic Acids Res.">
        <title>The tRNAglu (anticodon TTU) gene and its upstream sequence coding for a homolog of the E. coli large ribosome-subunit protein L14 in the Tetrahymena mitochondrial genome.</title>
        <authorList>
            <person name="Suyama Y."/>
            <person name="Jenney F."/>
        </authorList>
    </citation>
    <scope>NUCLEOTIDE SEQUENCE [GENOMIC DNA]</scope>
    <source>
        <strain>ST</strain>
    </source>
</reference>